<protein>
    <recommendedName>
        <fullName evidence="1">Nucleotide-binding protein Arth_2083</fullName>
    </recommendedName>
</protein>
<proteinExistence type="inferred from homology"/>
<keyword id="KW-0067">ATP-binding</keyword>
<keyword id="KW-0342">GTP-binding</keyword>
<keyword id="KW-0547">Nucleotide-binding</keyword>
<keyword id="KW-1185">Reference proteome</keyword>
<evidence type="ECO:0000255" key="1">
    <source>
        <dbReference type="HAMAP-Rule" id="MF_00636"/>
    </source>
</evidence>
<comment type="function">
    <text evidence="1">Displays ATPase and GTPase activities.</text>
</comment>
<comment type="similarity">
    <text evidence="1">Belongs to the RapZ-like family.</text>
</comment>
<accession>A0JWP3</accession>
<name>Y2083_ARTS2</name>
<reference key="1">
    <citation type="journal article" date="2013" name="Stand. Genomic Sci.">
        <title>Complete genome sequence of Arthrobacter sp. strain FB24.</title>
        <authorList>
            <person name="Nakatsu C.H."/>
            <person name="Barabote R."/>
            <person name="Thompson S."/>
            <person name="Bruce D."/>
            <person name="Detter C."/>
            <person name="Brettin T."/>
            <person name="Han C."/>
            <person name="Beasley F."/>
            <person name="Chen W."/>
            <person name="Konopka A."/>
            <person name="Xie G."/>
        </authorList>
    </citation>
    <scope>NUCLEOTIDE SEQUENCE [LARGE SCALE GENOMIC DNA]</scope>
    <source>
        <strain>FB24</strain>
    </source>
</reference>
<gene>
    <name type="ordered locus">Arth_2083</name>
</gene>
<dbReference type="EMBL" id="CP000454">
    <property type="protein sequence ID" value="ABK03463.1"/>
    <property type="molecule type" value="Genomic_DNA"/>
</dbReference>
<dbReference type="RefSeq" id="WP_011691929.1">
    <property type="nucleotide sequence ID" value="NC_008541.1"/>
</dbReference>
<dbReference type="SMR" id="A0JWP3"/>
<dbReference type="STRING" id="290399.Arth_2083"/>
<dbReference type="KEGG" id="art:Arth_2083"/>
<dbReference type="eggNOG" id="COG1660">
    <property type="taxonomic scope" value="Bacteria"/>
</dbReference>
<dbReference type="HOGENOM" id="CLU_059558_0_0_11"/>
<dbReference type="OrthoDB" id="9784461at2"/>
<dbReference type="Proteomes" id="UP000000754">
    <property type="component" value="Chromosome"/>
</dbReference>
<dbReference type="GO" id="GO:0005524">
    <property type="term" value="F:ATP binding"/>
    <property type="evidence" value="ECO:0007669"/>
    <property type="project" value="UniProtKB-UniRule"/>
</dbReference>
<dbReference type="GO" id="GO:0005525">
    <property type="term" value="F:GTP binding"/>
    <property type="evidence" value="ECO:0007669"/>
    <property type="project" value="UniProtKB-UniRule"/>
</dbReference>
<dbReference type="Gene3D" id="3.40.50.300">
    <property type="entry name" value="P-loop containing nucleotide triphosphate hydrolases"/>
    <property type="match status" value="1"/>
</dbReference>
<dbReference type="HAMAP" id="MF_00636">
    <property type="entry name" value="RapZ_like"/>
    <property type="match status" value="1"/>
</dbReference>
<dbReference type="InterPro" id="IPR027417">
    <property type="entry name" value="P-loop_NTPase"/>
</dbReference>
<dbReference type="InterPro" id="IPR005337">
    <property type="entry name" value="RapZ-like"/>
</dbReference>
<dbReference type="InterPro" id="IPR053930">
    <property type="entry name" value="RapZ-like_N"/>
</dbReference>
<dbReference type="InterPro" id="IPR053931">
    <property type="entry name" value="RapZ_C"/>
</dbReference>
<dbReference type="NCBIfam" id="NF003828">
    <property type="entry name" value="PRK05416.1"/>
    <property type="match status" value="1"/>
</dbReference>
<dbReference type="PANTHER" id="PTHR30448">
    <property type="entry name" value="RNASE ADAPTER PROTEIN RAPZ"/>
    <property type="match status" value="1"/>
</dbReference>
<dbReference type="PANTHER" id="PTHR30448:SF0">
    <property type="entry name" value="RNASE ADAPTER PROTEIN RAPZ"/>
    <property type="match status" value="1"/>
</dbReference>
<dbReference type="Pfam" id="PF22740">
    <property type="entry name" value="PapZ_C"/>
    <property type="match status" value="1"/>
</dbReference>
<dbReference type="Pfam" id="PF03668">
    <property type="entry name" value="RapZ-like_N"/>
    <property type="match status" value="1"/>
</dbReference>
<dbReference type="PIRSF" id="PIRSF005052">
    <property type="entry name" value="P-loopkin"/>
    <property type="match status" value="1"/>
</dbReference>
<dbReference type="SUPFAM" id="SSF52540">
    <property type="entry name" value="P-loop containing nucleoside triphosphate hydrolases"/>
    <property type="match status" value="1"/>
</dbReference>
<organism>
    <name type="scientific">Arthrobacter sp. (strain FB24)</name>
    <dbReference type="NCBI Taxonomy" id="290399"/>
    <lineage>
        <taxon>Bacteria</taxon>
        <taxon>Bacillati</taxon>
        <taxon>Actinomycetota</taxon>
        <taxon>Actinomycetes</taxon>
        <taxon>Micrococcales</taxon>
        <taxon>Micrococcaceae</taxon>
        <taxon>Arthrobacter</taxon>
    </lineage>
</organism>
<feature type="chain" id="PRO_0000383214" description="Nucleotide-binding protein Arth_2083">
    <location>
        <begin position="1"/>
        <end position="307"/>
    </location>
</feature>
<feature type="binding site" evidence="1">
    <location>
        <begin position="30"/>
        <end position="37"/>
    </location>
    <ligand>
        <name>ATP</name>
        <dbReference type="ChEBI" id="CHEBI:30616"/>
    </ligand>
</feature>
<feature type="binding site" evidence="1">
    <location>
        <begin position="81"/>
        <end position="84"/>
    </location>
    <ligand>
        <name>GTP</name>
        <dbReference type="ChEBI" id="CHEBI:37565"/>
    </ligand>
</feature>
<sequence>MAESTAGSEAEQDGMTPVRPVEAELLVVTGMSGAGRSTAADALEDHGWYVVENLPPQMLGTLAELVSHAPQSIPKLAVVVDVRSTALFADIRAALKTLEASGVTFRVLFLDANDDVLVRRFEQGRRPHPLQEGGRILDGIASERDLLHELRDSADIVLDTSEFNVHALATAITELFSETGPVALRLNVMSFGFKYGLPVDANFVVDARFIPNPHWVPQLRPHTGLDKDVSDYVLEAEGVKSFVDRYVLAIEPVLDGYRRENKHYATIAVGCTGGKHRSVAVAMELSKKLAQYPRVTVTTTHRDLGRE</sequence>